<name>SL9B2_PONAB</name>
<protein>
    <recommendedName>
        <fullName>Sodium/hydrogen exchanger 9B2</fullName>
    </recommendedName>
    <alternativeName>
        <fullName>Na(+)/H(+) exchanger NHA2</fullName>
    </alternativeName>
    <alternativeName>
        <fullName>Na(+)/H(+) exchanger-like domain-containing protein 2</fullName>
        <shortName>NHE domain-containing protein 2</shortName>
    </alternativeName>
    <alternativeName>
        <fullName>Sodium/hydrogen exchanger-like domain-containing protein 2</fullName>
    </alternativeName>
    <alternativeName>
        <fullName>Solute carrier family 9 subfamily B member 2</fullName>
    </alternativeName>
</protein>
<organism>
    <name type="scientific">Pongo abelii</name>
    <name type="common">Sumatran orangutan</name>
    <name type="synonym">Pongo pygmaeus abelii</name>
    <dbReference type="NCBI Taxonomy" id="9601"/>
    <lineage>
        <taxon>Eukaryota</taxon>
        <taxon>Metazoa</taxon>
        <taxon>Chordata</taxon>
        <taxon>Craniata</taxon>
        <taxon>Vertebrata</taxon>
        <taxon>Euteleostomi</taxon>
        <taxon>Mammalia</taxon>
        <taxon>Eutheria</taxon>
        <taxon>Euarchontoglires</taxon>
        <taxon>Primates</taxon>
        <taxon>Haplorrhini</taxon>
        <taxon>Catarrhini</taxon>
        <taxon>Hominidae</taxon>
        <taxon>Pongo</taxon>
    </lineage>
</organism>
<dbReference type="EMBL" id="CR860573">
    <property type="protein sequence ID" value="CAH92698.1"/>
    <property type="molecule type" value="mRNA"/>
</dbReference>
<dbReference type="RefSeq" id="NP_001126579.1">
    <property type="nucleotide sequence ID" value="NM_001133107.1"/>
</dbReference>
<dbReference type="RefSeq" id="XP_024101357.1">
    <property type="nucleotide sequence ID" value="XM_024245589.3"/>
</dbReference>
<dbReference type="SMR" id="Q5R6B8"/>
<dbReference type="FunCoup" id="Q5R6B8">
    <property type="interactions" value="13"/>
</dbReference>
<dbReference type="STRING" id="9601.ENSPPYP00000016719"/>
<dbReference type="Ensembl" id="ENSPPYT00000033199.2">
    <property type="protein sequence ID" value="ENSPPYP00000023935.2"/>
    <property type="gene ID" value="ENSPPYG00000014970.3"/>
</dbReference>
<dbReference type="GeneID" id="100173571"/>
<dbReference type="KEGG" id="pon:100173571"/>
<dbReference type="CTD" id="133308"/>
<dbReference type="eggNOG" id="KOG3826">
    <property type="taxonomic scope" value="Eukaryota"/>
</dbReference>
<dbReference type="GeneTree" id="ENSGT00390000013285"/>
<dbReference type="InParanoid" id="Q5R6B8"/>
<dbReference type="OMA" id="WAIPTFA"/>
<dbReference type="OrthoDB" id="423807at2759"/>
<dbReference type="Proteomes" id="UP000001595">
    <property type="component" value="Chromosome 4"/>
</dbReference>
<dbReference type="GO" id="GO:0016324">
    <property type="term" value="C:apical plasma membrane"/>
    <property type="evidence" value="ECO:0000250"/>
    <property type="project" value="UniProtKB"/>
</dbReference>
<dbReference type="GO" id="GO:0016323">
    <property type="term" value="C:basolateral plasma membrane"/>
    <property type="evidence" value="ECO:0000250"/>
    <property type="project" value="UniProtKB"/>
</dbReference>
<dbReference type="GO" id="GO:0010008">
    <property type="term" value="C:endosome membrane"/>
    <property type="evidence" value="ECO:0000250"/>
    <property type="project" value="UniProtKB"/>
</dbReference>
<dbReference type="GO" id="GO:0031966">
    <property type="term" value="C:mitochondrial membrane"/>
    <property type="evidence" value="ECO:0000250"/>
    <property type="project" value="UniProtKB"/>
</dbReference>
<dbReference type="GO" id="GO:0005886">
    <property type="term" value="C:plasma membrane"/>
    <property type="evidence" value="ECO:0000250"/>
    <property type="project" value="UniProtKB"/>
</dbReference>
<dbReference type="GO" id="GO:0055037">
    <property type="term" value="C:recycling endosome"/>
    <property type="evidence" value="ECO:0000250"/>
    <property type="project" value="UniProtKB"/>
</dbReference>
<dbReference type="GO" id="GO:0055038">
    <property type="term" value="C:recycling endosome membrane"/>
    <property type="evidence" value="ECO:0007669"/>
    <property type="project" value="UniProtKB-SubCell"/>
</dbReference>
<dbReference type="GO" id="GO:0097228">
    <property type="term" value="C:sperm principal piece"/>
    <property type="evidence" value="ECO:0000250"/>
    <property type="project" value="UniProtKB"/>
</dbReference>
<dbReference type="GO" id="GO:0030672">
    <property type="term" value="C:synaptic vesicle membrane"/>
    <property type="evidence" value="ECO:0000250"/>
    <property type="project" value="UniProtKB"/>
</dbReference>
<dbReference type="GO" id="GO:0042802">
    <property type="term" value="F:identical protein binding"/>
    <property type="evidence" value="ECO:0007669"/>
    <property type="project" value="Ensembl"/>
</dbReference>
<dbReference type="GO" id="GO:0010348">
    <property type="term" value="F:lithium:proton antiporter activity"/>
    <property type="evidence" value="ECO:0000250"/>
    <property type="project" value="UniProtKB"/>
</dbReference>
<dbReference type="GO" id="GO:0046872">
    <property type="term" value="F:metal ion binding"/>
    <property type="evidence" value="ECO:0007669"/>
    <property type="project" value="UniProtKB-KW"/>
</dbReference>
<dbReference type="GO" id="GO:0015385">
    <property type="term" value="F:sodium:proton antiporter activity"/>
    <property type="evidence" value="ECO:0000250"/>
    <property type="project" value="UniProtKB"/>
</dbReference>
<dbReference type="GO" id="GO:0072583">
    <property type="term" value="P:clathrin-dependent endocytosis"/>
    <property type="evidence" value="ECO:0007669"/>
    <property type="project" value="Ensembl"/>
</dbReference>
<dbReference type="GO" id="GO:0030317">
    <property type="term" value="P:flagellated sperm motility"/>
    <property type="evidence" value="ECO:0000250"/>
    <property type="project" value="UniProtKB"/>
</dbReference>
<dbReference type="GO" id="GO:0010351">
    <property type="term" value="P:lithium ion transport"/>
    <property type="evidence" value="ECO:0007669"/>
    <property type="project" value="Ensembl"/>
</dbReference>
<dbReference type="GO" id="GO:2001206">
    <property type="term" value="P:positive regulation of osteoclast development"/>
    <property type="evidence" value="ECO:0007669"/>
    <property type="project" value="Ensembl"/>
</dbReference>
<dbReference type="GO" id="GO:0061178">
    <property type="term" value="P:regulation of insulin secretion involved in cellular response to glucose stimulus"/>
    <property type="evidence" value="ECO:0007669"/>
    <property type="project" value="Ensembl"/>
</dbReference>
<dbReference type="GO" id="GO:0055078">
    <property type="term" value="P:sodium ion homeostasis"/>
    <property type="evidence" value="ECO:0000250"/>
    <property type="project" value="UniProtKB"/>
</dbReference>
<dbReference type="FunFam" id="1.20.1530.20:FF:000012">
    <property type="entry name" value="sodium/hydrogen exchanger 9B2 isoform X1"/>
    <property type="match status" value="1"/>
</dbReference>
<dbReference type="Gene3D" id="1.20.1530.20">
    <property type="match status" value="1"/>
</dbReference>
<dbReference type="InterPro" id="IPR006153">
    <property type="entry name" value="Cation/H_exchanger_TM"/>
</dbReference>
<dbReference type="InterPro" id="IPR051843">
    <property type="entry name" value="CPA1_transporter"/>
</dbReference>
<dbReference type="InterPro" id="IPR038770">
    <property type="entry name" value="Na+/solute_symporter_sf"/>
</dbReference>
<dbReference type="PANTHER" id="PTHR31102">
    <property type="match status" value="1"/>
</dbReference>
<dbReference type="PANTHER" id="PTHR31102:SF14">
    <property type="entry name" value="SODIUM_HYDROGEN EXCHANGER 9B2"/>
    <property type="match status" value="1"/>
</dbReference>
<dbReference type="Pfam" id="PF00999">
    <property type="entry name" value="Na_H_Exchanger"/>
    <property type="match status" value="1"/>
</dbReference>
<comment type="function">
    <text evidence="2 3">Electroneutral Na(+) Li(+)/H(+) antiporter that extrudes Na(+) or Li(+) in exchange for external protons across the membrane (By similarity). Uses the proton gradient/membrane potential to extrude sodium (By similarity). Contributes to the regulation of intracellular pH and sodium homeostasis (By similarity). Also able to mediate Na(+)/Li(+) antiporter activity in kidney (By similarity). May play a physiological role in renal tubular function and blood pressure homeostasis (By similarity). Plays an important role for insulin secretion and clathrin-mediated endocytosis in beta-cells. Involved in sperm motility and fertility. It is controversial whether SLC9B2 plays a role in osteoclast differentiation or not (By similarity).</text>
</comment>
<comment type="catalytic activity">
    <reaction evidence="3">
        <text>Li(+)(out) + H(+)(in) = Li(+)(in) + H(+)(out)</text>
        <dbReference type="Rhea" id="RHEA:72407"/>
        <dbReference type="ChEBI" id="CHEBI:15378"/>
        <dbReference type="ChEBI" id="CHEBI:49713"/>
    </reaction>
</comment>
<comment type="catalytic activity">
    <reaction evidence="3">
        <text>Li(+)(in) + Na(+)(out) = Li(+)(out) + Na(+)(in)</text>
        <dbReference type="Rhea" id="RHEA:72415"/>
        <dbReference type="ChEBI" id="CHEBI:29101"/>
        <dbReference type="ChEBI" id="CHEBI:49713"/>
    </reaction>
</comment>
<comment type="catalytic activity">
    <reaction evidence="3">
        <text>Na(+)(in) + H(+)(out) = Na(+)(out) + H(+)(in)</text>
        <dbReference type="Rhea" id="RHEA:29419"/>
        <dbReference type="ChEBI" id="CHEBI:15378"/>
        <dbReference type="ChEBI" id="CHEBI:29101"/>
    </reaction>
</comment>
<comment type="activity regulation">
    <text evidence="3">Allosterically inhibited by the N-terminal domain. Inhibited by phloretin.</text>
</comment>
<comment type="subunit">
    <text evidence="1">Homodimer; dimerization is essential for SLC9B2 activity. Lipids seem to play a role in the stabilization of the dimerization subdomain.</text>
</comment>
<comment type="subcellular location">
    <subcellularLocation>
        <location evidence="2">Cell membrane</location>
        <topology evidence="1">Multi-pass membrane protein</topology>
    </subcellularLocation>
    <subcellularLocation>
        <location evidence="2">Mitochondrion membrane</location>
        <topology evidence="1">Multi-pass membrane protein</topology>
    </subcellularLocation>
    <subcellularLocation>
        <location evidence="2">Endosome membrane</location>
        <topology evidence="1">Multi-pass membrane protein</topology>
    </subcellularLocation>
    <subcellularLocation>
        <location evidence="2">Recycling endosome membrane</location>
        <topology evidence="1">Multi-pass membrane protein</topology>
    </subcellularLocation>
    <subcellularLocation>
        <location evidence="2">Cytoplasmic vesicle</location>
        <location evidence="2">Secretory vesicle</location>
        <location evidence="2">Synaptic vesicle membrane</location>
        <topology evidence="1">Multi-pass membrane protein</topology>
    </subcellularLocation>
    <subcellularLocation>
        <location evidence="2">Basolateral cell membrane</location>
        <topology evidence="1">Multi-pass membrane protein</topology>
    </subcellularLocation>
    <subcellularLocation>
        <location evidence="2">Apical cell membrane</location>
        <topology evidence="1">Multi-pass membrane protein</topology>
    </subcellularLocation>
</comment>
<comment type="miscellaneous">
    <text evidence="2">The subcellular localization of SLC9B2 remains controversial. Was initially thought to partially localize to mitochondria. However SLC9B2 does not seem to contain a mitochondrial targeting sequence. It was later established that its localizes predominantly in plasma membrane or intracellularly to endosomes and lysosomes (By similarity). In another recent study, endogenous SLC9B2 in the distal tubular cell line mpkDCT4 is detected in recycling endosomes but absent in plasma membrane (By similarity).</text>
</comment>
<comment type="similarity">
    <text evidence="5">Belongs to the monovalent cation:proton antiporter 1 (CPA1) transporter (TC 2.A.36) family.</text>
</comment>
<evidence type="ECO:0000250" key="1">
    <source>
        <dbReference type="UniProtKB" id="A0A6P3HVI0"/>
    </source>
</evidence>
<evidence type="ECO:0000250" key="2">
    <source>
        <dbReference type="UniProtKB" id="Q5BKR2"/>
    </source>
</evidence>
<evidence type="ECO:0000250" key="3">
    <source>
        <dbReference type="UniProtKB" id="Q86UD5"/>
    </source>
</evidence>
<evidence type="ECO:0000256" key="4">
    <source>
        <dbReference type="SAM" id="MobiDB-lite"/>
    </source>
</evidence>
<evidence type="ECO:0000305" key="5"/>
<sequence>MGDEDKRITYEDSEPSTGMNYTPSMHQETQEETVMKLKGIDANEPTEGSILLKSSEKKLQETPTEANHVQRLRQMLACPPHGLLDRVVTNVTIIVLLWAVIWSITGSECLPGGNLFGIIILFYCAIIGGKLLGLIKLPTLPPLPSLLGMLLAGFLIRNIPVINDNVQIKHKWSSSLRSIALSIILVRAGLGLDSKALKKLKGVCVRLSMGPCIVEACTSALLAHYLLGLPWQWGFILGFVLGAVSPAVVVPSMLLLQGGGYGVEKGVPTLLMAAGSFDDILAITGFNTCLGIAFSTGSTVFNVLRGVLEVVIGVATGSVLGFFIQYFPSCDQDKLVCKRTFLVLGLSVLAVFSSVHFGFPGSGGLCTLVMAFLAGMGWTSEKAEVEKIIAVAWDIFQPLLFGLIGAEVSIASLRPETVGLCVATVGIAVLIRILTTFLMVCFAGFNLKEKIFISFAWLPKATVQAAIGSVALDTARSHGEKQLEDYGMDVLTVAFLSILITAPIGSLLIGLLGPRLLQKVEHQNKDEEVQGETSVQV</sequence>
<reference key="1">
    <citation type="submission" date="2004-11" db="EMBL/GenBank/DDBJ databases">
        <authorList>
            <consortium name="The German cDNA consortium"/>
        </authorList>
    </citation>
    <scope>NUCLEOTIDE SEQUENCE [LARGE SCALE MRNA]</scope>
    <source>
        <tissue>Brain cortex</tissue>
    </source>
</reference>
<accession>Q5R6B8</accession>
<gene>
    <name type="primary">SLC9B2</name>
    <name type="synonym">NHA2</name>
    <name type="synonym">NHEDC2</name>
</gene>
<keyword id="KW-0050">Antiport</keyword>
<keyword id="KW-1003">Cell membrane</keyword>
<keyword id="KW-0968">Cytoplasmic vesicle</keyword>
<keyword id="KW-0967">Endosome</keyword>
<keyword id="KW-0375">Hydrogen ion transport</keyword>
<keyword id="KW-0406">Ion transport</keyword>
<keyword id="KW-0472">Membrane</keyword>
<keyword id="KW-0479">Metal-binding</keyword>
<keyword id="KW-0496">Mitochondrion</keyword>
<keyword id="KW-0597">Phosphoprotein</keyword>
<keyword id="KW-1185">Reference proteome</keyword>
<keyword id="KW-0915">Sodium</keyword>
<keyword id="KW-0739">Sodium transport</keyword>
<keyword id="KW-0770">Synapse</keyword>
<keyword id="KW-0812">Transmembrane</keyword>
<keyword id="KW-1133">Transmembrane helix</keyword>
<keyword id="KW-0813">Transport</keyword>
<proteinExistence type="evidence at transcript level"/>
<feature type="chain" id="PRO_0000331272" description="Sodium/hydrogen exchanger 9B2">
    <location>
        <begin position="1"/>
        <end position="537"/>
    </location>
</feature>
<feature type="topological domain" description="Cytoplasmic" evidence="5">
    <location>
        <begin position="1"/>
        <end position="86"/>
    </location>
</feature>
<feature type="transmembrane region" description="Helical; Name=1" evidence="1">
    <location>
        <begin position="87"/>
        <end position="104"/>
    </location>
</feature>
<feature type="topological domain" description="Extracellular" evidence="5">
    <location>
        <begin position="105"/>
        <end position="113"/>
    </location>
</feature>
<feature type="transmembrane region" description="Helical; Name=2" evidence="1">
    <location>
        <begin position="114"/>
        <end position="133"/>
    </location>
</feature>
<feature type="topological domain" description="Cytoplasmic" evidence="5">
    <location>
        <begin position="134"/>
        <end position="144"/>
    </location>
</feature>
<feature type="transmembrane region" description="Helical; Name=3" evidence="1">
    <location>
        <begin position="145"/>
        <end position="161"/>
    </location>
</feature>
<feature type="topological domain" description="Extracellular" evidence="5">
    <location>
        <begin position="162"/>
        <end position="171"/>
    </location>
</feature>
<feature type="transmembrane region" description="Helical; Name=4" evidence="1">
    <location>
        <begin position="172"/>
        <end position="189"/>
    </location>
</feature>
<feature type="topological domain" description="Cytoplasmic" evidence="5">
    <location>
        <begin position="190"/>
        <end position="200"/>
    </location>
</feature>
<feature type="transmembrane region" description="Helical; Name=5" evidence="1">
    <location>
        <begin position="201"/>
        <end position="227"/>
    </location>
</feature>
<feature type="topological domain" description="Extracellular" evidence="5">
    <location>
        <begin position="228"/>
        <end position="233"/>
    </location>
</feature>
<feature type="transmembrane region" description="Helical; Name=6" evidence="1">
    <location>
        <begin position="234"/>
        <end position="242"/>
    </location>
</feature>
<feature type="topological domain" description="Cytoplasmic" evidence="5">
    <location>
        <begin position="243"/>
        <end position="270"/>
    </location>
</feature>
<feature type="transmembrane region" description="Helical; Name=7" evidence="1">
    <location>
        <begin position="271"/>
        <end position="290"/>
    </location>
</feature>
<feature type="topological domain" description="Extracellular" evidence="5">
    <location>
        <begin position="291"/>
        <end position="300"/>
    </location>
</feature>
<feature type="transmembrane region" description="Helical; Name=8" evidence="1">
    <location>
        <begin position="301"/>
        <end position="324"/>
    </location>
</feature>
<feature type="topological domain" description="Cytoplasmic" evidence="5">
    <location>
        <begin position="325"/>
        <end position="339"/>
    </location>
</feature>
<feature type="transmembrane region" description="Helical; Name=9" evidence="1">
    <location>
        <begin position="340"/>
        <end position="357"/>
    </location>
</feature>
<feature type="topological domain" description="Extracellular" evidence="5">
    <location>
        <begin position="358"/>
        <end position="361"/>
    </location>
</feature>
<feature type="transmembrane region" description="Helical; Name=10" evidence="1">
    <location>
        <begin position="362"/>
        <end position="373"/>
    </location>
</feature>
<feature type="topological domain" description="Cytoplasmic" evidence="5">
    <location>
        <begin position="374"/>
        <end position="390"/>
    </location>
</feature>
<feature type="transmembrane region" description="Helical; Name=11" evidence="1">
    <location>
        <begin position="391"/>
        <end position="411"/>
    </location>
</feature>
<feature type="topological domain" description="Extracellular" evidence="5">
    <location>
        <begin position="412"/>
        <end position="417"/>
    </location>
</feature>
<feature type="transmembrane region" description="Helical; Name=12" evidence="1">
    <location>
        <begin position="418"/>
        <end position="440"/>
    </location>
</feature>
<feature type="topological domain" description="Cytoplasmic" evidence="5">
    <location>
        <begin position="441"/>
        <end position="461"/>
    </location>
</feature>
<feature type="transmembrane region" description="Helical; Name=13" evidence="1">
    <location>
        <begin position="462"/>
        <end position="473"/>
    </location>
</feature>
<feature type="topological domain" description="Extracellular" evidence="5">
    <location>
        <begin position="474"/>
        <end position="486"/>
    </location>
</feature>
<feature type="transmembrane region" description="Helical; Name=14" evidence="1">
    <location>
        <begin position="487"/>
        <end position="509"/>
    </location>
</feature>
<feature type="topological domain" description="Cytoplasmic" evidence="5">
    <location>
        <begin position="510"/>
        <end position="537"/>
    </location>
</feature>
<feature type="region of interest" description="Disordered" evidence="4">
    <location>
        <begin position="1"/>
        <end position="33"/>
    </location>
</feature>
<feature type="compositionally biased region" description="Basic and acidic residues" evidence="4">
    <location>
        <begin position="1"/>
        <end position="10"/>
    </location>
</feature>
<feature type="compositionally biased region" description="Polar residues" evidence="4">
    <location>
        <begin position="15"/>
        <end position="27"/>
    </location>
</feature>
<feature type="binding site" evidence="3">
    <location>
        <position position="244"/>
    </location>
    <ligand>
        <name>Na(+)</name>
        <dbReference type="ChEBI" id="CHEBI:29101"/>
    </ligand>
</feature>
<feature type="binding site" evidence="3">
    <location>
        <position position="275"/>
    </location>
    <ligand>
        <name>Na(+)</name>
        <dbReference type="ChEBI" id="CHEBI:29101"/>
    </ligand>
</feature>
<feature type="binding site" evidence="3">
    <location>
        <position position="278"/>
    </location>
    <ligand>
        <name>Na(+)</name>
        <dbReference type="ChEBI" id="CHEBI:29101"/>
    </ligand>
</feature>
<feature type="binding site" evidence="3">
    <location>
        <position position="279"/>
    </location>
    <ligand>
        <name>Na(+)</name>
        <dbReference type="ChEBI" id="CHEBI:29101"/>
    </ligand>
</feature>
<feature type="modified residue" description="Phosphoserine" evidence="3">
    <location>
        <position position="49"/>
    </location>
</feature>